<sequence length="351" mass="37247">MLKFIQNNREGTALLAILTLFALLGIIDRNYFSLQTFTMIFSSAQILILLAIGATLVMLTRNIDVSVGSITGLCAVTVGMALNAGFGLAASCLFALLVGMVAGFFNGILVTWLRIPAIVATLGTLGLYRGLMLLLTGGKWIEGLPADLKSLSTPILFSISPIGWLTMLLILAMAWLLGKTAFGRSFYATGDNLQGARQLGVRTDSLRIFAFSMNGVMAALAGIVFASQIGFIPNQTGNGLEMKAIAACVLGGISLLGGTGTIIGAILGAFLLTQIDSVLVLLRLPAWWNDFIAGLVLLGVLVFDGRLRCAVERNIRQQKYARFTAQAIISDKKPTVSDNNPAASNKKKAAL</sequence>
<accession>A4TQL6</accession>
<protein>
    <recommendedName>
        <fullName>Autoinducer 2 import system permease protein LsrC</fullName>
        <shortName>AI-2 import system permease protein LsrC</shortName>
    </recommendedName>
</protein>
<reference key="1">
    <citation type="submission" date="2007-02" db="EMBL/GenBank/DDBJ databases">
        <title>Complete sequence of chromosome of Yersinia pestis Pestoides F.</title>
        <authorList>
            <consortium name="US DOE Joint Genome Institute"/>
            <person name="Copeland A."/>
            <person name="Lucas S."/>
            <person name="Lapidus A."/>
            <person name="Barry K."/>
            <person name="Detter J.C."/>
            <person name="Glavina del Rio T."/>
            <person name="Hammon N."/>
            <person name="Israni S."/>
            <person name="Dalin E."/>
            <person name="Tice H."/>
            <person name="Pitluck S."/>
            <person name="Di Bartolo G."/>
            <person name="Chain P."/>
            <person name="Malfatti S."/>
            <person name="Shin M."/>
            <person name="Vergez L."/>
            <person name="Schmutz J."/>
            <person name="Larimer F."/>
            <person name="Land M."/>
            <person name="Hauser L."/>
            <person name="Worsham P."/>
            <person name="Chu M."/>
            <person name="Bearden S."/>
            <person name="Garcia E."/>
            <person name="Richardson P."/>
        </authorList>
    </citation>
    <scope>NUCLEOTIDE SEQUENCE [LARGE SCALE GENOMIC DNA]</scope>
    <source>
        <strain>Pestoides F</strain>
    </source>
</reference>
<organism>
    <name type="scientific">Yersinia pestis (strain Pestoides F)</name>
    <dbReference type="NCBI Taxonomy" id="386656"/>
    <lineage>
        <taxon>Bacteria</taxon>
        <taxon>Pseudomonadati</taxon>
        <taxon>Pseudomonadota</taxon>
        <taxon>Gammaproteobacteria</taxon>
        <taxon>Enterobacterales</taxon>
        <taxon>Yersiniaceae</taxon>
        <taxon>Yersinia</taxon>
    </lineage>
</organism>
<name>LSRC_YERPP</name>
<proteinExistence type="inferred from homology"/>
<feature type="chain" id="PRO_0000351355" description="Autoinducer 2 import system permease protein LsrC">
    <location>
        <begin position="1"/>
        <end position="351"/>
    </location>
</feature>
<feature type="transmembrane region" description="Helical" evidence="2">
    <location>
        <begin position="14"/>
        <end position="34"/>
    </location>
</feature>
<feature type="transmembrane region" description="Helical" evidence="2">
    <location>
        <begin position="39"/>
        <end position="59"/>
    </location>
</feature>
<feature type="transmembrane region" description="Helical" evidence="2">
    <location>
        <begin position="70"/>
        <end position="90"/>
    </location>
</feature>
<feature type="transmembrane region" description="Helical" evidence="2">
    <location>
        <begin position="93"/>
        <end position="113"/>
    </location>
</feature>
<feature type="transmembrane region" description="Helical" evidence="2">
    <location>
        <begin position="115"/>
        <end position="135"/>
    </location>
</feature>
<feature type="transmembrane region" description="Helical" evidence="2">
    <location>
        <begin position="155"/>
        <end position="175"/>
    </location>
</feature>
<feature type="transmembrane region" description="Helical" evidence="2">
    <location>
        <begin position="213"/>
        <end position="233"/>
    </location>
</feature>
<feature type="transmembrane region" description="Helical" evidence="2">
    <location>
        <begin position="252"/>
        <end position="272"/>
    </location>
</feature>
<feature type="transmembrane region" description="Helical" evidence="2">
    <location>
        <begin position="284"/>
        <end position="304"/>
    </location>
</feature>
<gene>
    <name type="primary">lsrC</name>
    <name type="ordered locus">YPDSF_3220</name>
</gene>
<keyword id="KW-0997">Cell inner membrane</keyword>
<keyword id="KW-1003">Cell membrane</keyword>
<keyword id="KW-0472">Membrane</keyword>
<keyword id="KW-0812">Transmembrane</keyword>
<keyword id="KW-1133">Transmembrane helix</keyword>
<keyword id="KW-0813">Transport</keyword>
<dbReference type="EMBL" id="CP000668">
    <property type="protein sequence ID" value="ABP41578.1"/>
    <property type="molecule type" value="Genomic_DNA"/>
</dbReference>
<dbReference type="RefSeq" id="WP_002209191.1">
    <property type="nucleotide sequence ID" value="NZ_CP009715.1"/>
</dbReference>
<dbReference type="GeneID" id="57974199"/>
<dbReference type="KEGG" id="ypp:YPDSF_3220"/>
<dbReference type="PATRIC" id="fig|386656.14.peg.1124"/>
<dbReference type="GO" id="GO:0005886">
    <property type="term" value="C:plasma membrane"/>
    <property type="evidence" value="ECO:0007669"/>
    <property type="project" value="UniProtKB-SubCell"/>
</dbReference>
<dbReference type="GO" id="GO:0022857">
    <property type="term" value="F:transmembrane transporter activity"/>
    <property type="evidence" value="ECO:0007669"/>
    <property type="project" value="InterPro"/>
</dbReference>
<dbReference type="CDD" id="cd06579">
    <property type="entry name" value="TM_PBP1_transp_AraH_like"/>
    <property type="match status" value="1"/>
</dbReference>
<dbReference type="InterPro" id="IPR001851">
    <property type="entry name" value="ABC_transp_permease"/>
</dbReference>
<dbReference type="NCBIfam" id="NF011961">
    <property type="entry name" value="PRK15432.1"/>
    <property type="match status" value="1"/>
</dbReference>
<dbReference type="PANTHER" id="PTHR32196">
    <property type="entry name" value="ABC TRANSPORTER PERMEASE PROTEIN YPHD-RELATED-RELATED"/>
    <property type="match status" value="1"/>
</dbReference>
<dbReference type="PANTHER" id="PTHR32196:SF29">
    <property type="entry name" value="AUTOINDUCER 2 IMPORT SYSTEM PERMEASE PROTEIN LSRC"/>
    <property type="match status" value="1"/>
</dbReference>
<dbReference type="Pfam" id="PF02653">
    <property type="entry name" value="BPD_transp_2"/>
    <property type="match status" value="1"/>
</dbReference>
<evidence type="ECO:0000250" key="1"/>
<evidence type="ECO:0000255" key="2"/>
<evidence type="ECO:0000305" key="3"/>
<comment type="function">
    <text evidence="1">Part of the ABC transporter complex LsrABCD involved in autoinducer 2 (AI-2) import. Probably responsible for the translocation of the substrate across the membrane (By similarity).</text>
</comment>
<comment type="subunit">
    <text evidence="1">The complex is composed of two ATP-binding proteins (LsrA), two transmembrane proteins (LsrC and LsrD) and a solute-binding protein (LsrB).</text>
</comment>
<comment type="subcellular location">
    <subcellularLocation>
        <location evidence="1">Cell inner membrane</location>
        <topology evidence="1">Multi-pass membrane protein</topology>
    </subcellularLocation>
</comment>
<comment type="similarity">
    <text evidence="3">Belongs to the binding-protein-dependent transport system permease family. AraH/RbsC subfamily.</text>
</comment>